<proteinExistence type="inferred from homology"/>
<accession>B3PDC2</accession>
<protein>
    <recommendedName>
        <fullName evidence="1">tRNA dimethylallyltransferase</fullName>
        <ecNumber evidence="1">2.5.1.75</ecNumber>
    </recommendedName>
    <alternativeName>
        <fullName evidence="1">Dimethylallyl diphosphate:tRNA dimethylallyltransferase</fullName>
        <shortName evidence="1">DMAPP:tRNA dimethylallyltransferase</shortName>
        <shortName evidence="1">DMATase</shortName>
    </alternativeName>
    <alternativeName>
        <fullName evidence="1">Isopentenyl-diphosphate:tRNA isopentenyltransferase</fullName>
        <shortName evidence="1">IPP transferase</shortName>
        <shortName evidence="1">IPPT</shortName>
        <shortName evidence="1">IPTase</shortName>
    </alternativeName>
</protein>
<feature type="chain" id="PRO_0000377110" description="tRNA dimethylallyltransferase">
    <location>
        <begin position="1"/>
        <end position="338"/>
    </location>
</feature>
<feature type="region of interest" description="Interaction with substrate tRNA" evidence="1">
    <location>
        <begin position="38"/>
        <end position="41"/>
    </location>
</feature>
<feature type="region of interest" description="Interaction with substrate tRNA" evidence="1">
    <location>
        <begin position="162"/>
        <end position="166"/>
    </location>
</feature>
<feature type="binding site" evidence="1">
    <location>
        <begin position="13"/>
        <end position="20"/>
    </location>
    <ligand>
        <name>ATP</name>
        <dbReference type="ChEBI" id="CHEBI:30616"/>
    </ligand>
</feature>
<feature type="binding site" evidence="1">
    <location>
        <begin position="15"/>
        <end position="20"/>
    </location>
    <ligand>
        <name>substrate</name>
    </ligand>
</feature>
<feature type="site" description="Interaction with substrate tRNA" evidence="1">
    <location>
        <position position="104"/>
    </location>
</feature>
<feature type="site" description="Interaction with substrate tRNA" evidence="1">
    <location>
        <position position="126"/>
    </location>
</feature>
<comment type="function">
    <text evidence="1">Catalyzes the transfer of a dimethylallyl group onto the adenine at position 37 in tRNAs that read codons beginning with uridine, leading to the formation of N6-(dimethylallyl)adenosine (i(6)A).</text>
</comment>
<comment type="catalytic activity">
    <reaction evidence="1">
        <text>adenosine(37) in tRNA + dimethylallyl diphosphate = N(6)-dimethylallyladenosine(37) in tRNA + diphosphate</text>
        <dbReference type="Rhea" id="RHEA:26482"/>
        <dbReference type="Rhea" id="RHEA-COMP:10162"/>
        <dbReference type="Rhea" id="RHEA-COMP:10375"/>
        <dbReference type="ChEBI" id="CHEBI:33019"/>
        <dbReference type="ChEBI" id="CHEBI:57623"/>
        <dbReference type="ChEBI" id="CHEBI:74411"/>
        <dbReference type="ChEBI" id="CHEBI:74415"/>
        <dbReference type="EC" id="2.5.1.75"/>
    </reaction>
</comment>
<comment type="cofactor">
    <cofactor evidence="1">
        <name>Mg(2+)</name>
        <dbReference type="ChEBI" id="CHEBI:18420"/>
    </cofactor>
</comment>
<comment type="subunit">
    <text evidence="1">Monomer.</text>
</comment>
<comment type="similarity">
    <text evidence="1">Belongs to the IPP transferase family.</text>
</comment>
<gene>
    <name evidence="1" type="primary">miaA</name>
    <name type="ordered locus">CJA_3080</name>
</gene>
<reference key="1">
    <citation type="journal article" date="2008" name="J. Bacteriol.">
        <title>Insights into plant cell wall degradation from the genome sequence of the soil bacterium Cellvibrio japonicus.</title>
        <authorList>
            <person name="DeBoy R.T."/>
            <person name="Mongodin E.F."/>
            <person name="Fouts D.E."/>
            <person name="Tailford L.E."/>
            <person name="Khouri H."/>
            <person name="Emerson J.B."/>
            <person name="Mohamoud Y."/>
            <person name="Watkins K."/>
            <person name="Henrissat B."/>
            <person name="Gilbert H.J."/>
            <person name="Nelson K.E."/>
        </authorList>
    </citation>
    <scope>NUCLEOTIDE SEQUENCE [LARGE SCALE GENOMIC DNA]</scope>
    <source>
        <strain>Ueda107</strain>
    </source>
</reference>
<name>MIAA_CELJU</name>
<keyword id="KW-0067">ATP-binding</keyword>
<keyword id="KW-0460">Magnesium</keyword>
<keyword id="KW-0547">Nucleotide-binding</keyword>
<keyword id="KW-1185">Reference proteome</keyword>
<keyword id="KW-0808">Transferase</keyword>
<keyword id="KW-0819">tRNA processing</keyword>
<organism>
    <name type="scientific">Cellvibrio japonicus (strain Ueda107)</name>
    <name type="common">Pseudomonas fluorescens subsp. cellulosa</name>
    <dbReference type="NCBI Taxonomy" id="498211"/>
    <lineage>
        <taxon>Bacteria</taxon>
        <taxon>Pseudomonadati</taxon>
        <taxon>Pseudomonadota</taxon>
        <taxon>Gammaproteobacteria</taxon>
        <taxon>Cellvibrionales</taxon>
        <taxon>Cellvibrionaceae</taxon>
        <taxon>Cellvibrio</taxon>
    </lineage>
</organism>
<evidence type="ECO:0000255" key="1">
    <source>
        <dbReference type="HAMAP-Rule" id="MF_00185"/>
    </source>
</evidence>
<dbReference type="EC" id="2.5.1.75" evidence="1"/>
<dbReference type="EMBL" id="CP000934">
    <property type="protein sequence ID" value="ACE82711.1"/>
    <property type="molecule type" value="Genomic_DNA"/>
</dbReference>
<dbReference type="RefSeq" id="WP_012488658.1">
    <property type="nucleotide sequence ID" value="NC_010995.1"/>
</dbReference>
<dbReference type="SMR" id="B3PDC2"/>
<dbReference type="STRING" id="498211.CJA_3080"/>
<dbReference type="KEGG" id="cja:CJA_3080"/>
<dbReference type="eggNOG" id="COG0324">
    <property type="taxonomic scope" value="Bacteria"/>
</dbReference>
<dbReference type="HOGENOM" id="CLU_032616_0_0_6"/>
<dbReference type="OrthoDB" id="9776390at2"/>
<dbReference type="Proteomes" id="UP000001036">
    <property type="component" value="Chromosome"/>
</dbReference>
<dbReference type="GO" id="GO:0005524">
    <property type="term" value="F:ATP binding"/>
    <property type="evidence" value="ECO:0007669"/>
    <property type="project" value="UniProtKB-UniRule"/>
</dbReference>
<dbReference type="GO" id="GO:0052381">
    <property type="term" value="F:tRNA dimethylallyltransferase activity"/>
    <property type="evidence" value="ECO:0007669"/>
    <property type="project" value="UniProtKB-UniRule"/>
</dbReference>
<dbReference type="GO" id="GO:0006400">
    <property type="term" value="P:tRNA modification"/>
    <property type="evidence" value="ECO:0007669"/>
    <property type="project" value="TreeGrafter"/>
</dbReference>
<dbReference type="FunFam" id="1.10.20.140:FF:000001">
    <property type="entry name" value="tRNA dimethylallyltransferase"/>
    <property type="match status" value="1"/>
</dbReference>
<dbReference type="Gene3D" id="1.10.20.140">
    <property type="match status" value="1"/>
</dbReference>
<dbReference type="Gene3D" id="3.40.50.300">
    <property type="entry name" value="P-loop containing nucleotide triphosphate hydrolases"/>
    <property type="match status" value="1"/>
</dbReference>
<dbReference type="HAMAP" id="MF_00185">
    <property type="entry name" value="IPP_trans"/>
    <property type="match status" value="1"/>
</dbReference>
<dbReference type="InterPro" id="IPR039657">
    <property type="entry name" value="Dimethylallyltransferase"/>
</dbReference>
<dbReference type="InterPro" id="IPR018022">
    <property type="entry name" value="IPT"/>
</dbReference>
<dbReference type="InterPro" id="IPR027417">
    <property type="entry name" value="P-loop_NTPase"/>
</dbReference>
<dbReference type="NCBIfam" id="TIGR00174">
    <property type="entry name" value="miaA"/>
    <property type="match status" value="1"/>
</dbReference>
<dbReference type="PANTHER" id="PTHR11088">
    <property type="entry name" value="TRNA DIMETHYLALLYLTRANSFERASE"/>
    <property type="match status" value="1"/>
</dbReference>
<dbReference type="PANTHER" id="PTHR11088:SF60">
    <property type="entry name" value="TRNA DIMETHYLALLYLTRANSFERASE"/>
    <property type="match status" value="1"/>
</dbReference>
<dbReference type="Pfam" id="PF01715">
    <property type="entry name" value="IPPT"/>
    <property type="match status" value="1"/>
</dbReference>
<dbReference type="SUPFAM" id="SSF52540">
    <property type="entry name" value="P-loop containing nucleoside triphosphate hydrolases"/>
    <property type="match status" value="2"/>
</dbReference>
<sequence>MDSTRLPVIFLMGPTASGKTDLAMRLREHLPVELISVDSTLVYRGMDIGTAKPSPEELAAAPHRLIDIRDPAEPYSVADFLVDAEREISAIHRQGNIPLLVGGTMLYFRALLDGLAQMPAADTSVRAQIEADAAQFGWPYVHQQLAEVDPDVAADIHPNHSQRVSRALEVYRVSGKTMTQLRREQQASGDVRAFEDRYCVRQIAISPRDRAILHQRIEQRFHAMLAQGLVEEVRRLYQRGDLHTDLPAIRAVGYRQVWDYLDDKLHYDEMVARGIIATRQLAKRQFTWLRGWMTNEGARSTSENSQLHWLYTETEQGKPLAKEEIVRCALNFLKPTAI</sequence>